<comment type="function">
    <text evidence="1">RNA chaperone with significant RNA binding, RNA strand exchange and RNA duplexing activities. May regulate ProP activity through an RNA-based, post-transcriptional mechanism.</text>
</comment>
<comment type="subcellular location">
    <subcellularLocation>
        <location evidence="1">Cytoplasm</location>
    </subcellularLocation>
</comment>
<comment type="similarity">
    <text evidence="1">Belongs to the ProQ family.</text>
</comment>
<organism>
    <name type="scientific">Shigella dysenteriae serotype 1 (strain Sd197)</name>
    <dbReference type="NCBI Taxonomy" id="300267"/>
    <lineage>
        <taxon>Bacteria</taxon>
        <taxon>Pseudomonadati</taxon>
        <taxon>Pseudomonadota</taxon>
        <taxon>Gammaproteobacteria</taxon>
        <taxon>Enterobacterales</taxon>
        <taxon>Enterobacteriaceae</taxon>
        <taxon>Shigella</taxon>
    </lineage>
</organism>
<accession>Q32F26</accession>
<proteinExistence type="inferred from homology"/>
<feature type="chain" id="PRO_0000303099" description="RNA chaperone ProQ">
    <location>
        <begin position="1"/>
        <end position="232"/>
    </location>
</feature>
<feature type="region of interest" description="Disordered" evidence="2">
    <location>
        <begin position="105"/>
        <end position="182"/>
    </location>
</feature>
<feature type="compositionally biased region" description="Basic and acidic residues" evidence="2">
    <location>
        <begin position="117"/>
        <end position="136"/>
    </location>
</feature>
<feature type="compositionally biased region" description="Basic residues" evidence="2">
    <location>
        <begin position="137"/>
        <end position="146"/>
    </location>
</feature>
<feature type="compositionally biased region" description="Basic and acidic residues" evidence="2">
    <location>
        <begin position="147"/>
        <end position="177"/>
    </location>
</feature>
<name>PROQ_SHIDS</name>
<dbReference type="EMBL" id="CP000034">
    <property type="protein sequence ID" value="ABB62079.1"/>
    <property type="molecule type" value="Genomic_DNA"/>
</dbReference>
<dbReference type="RefSeq" id="WP_000431368.1">
    <property type="nucleotide sequence ID" value="NC_007606.1"/>
</dbReference>
<dbReference type="RefSeq" id="YP_403570.1">
    <property type="nucleotide sequence ID" value="NC_007606.1"/>
</dbReference>
<dbReference type="SMR" id="Q32F26"/>
<dbReference type="STRING" id="300267.SDY_1979"/>
<dbReference type="EnsemblBacteria" id="ABB62079">
    <property type="protein sequence ID" value="ABB62079"/>
    <property type="gene ID" value="SDY_1979"/>
</dbReference>
<dbReference type="GeneID" id="75171902"/>
<dbReference type="KEGG" id="sdy:SDY_1979"/>
<dbReference type="PATRIC" id="fig|300267.13.peg.2389"/>
<dbReference type="HOGENOM" id="CLU_113254_0_0_6"/>
<dbReference type="Proteomes" id="UP000002716">
    <property type="component" value="Chromosome"/>
</dbReference>
<dbReference type="GO" id="GO:0005829">
    <property type="term" value="C:cytosol"/>
    <property type="evidence" value="ECO:0007669"/>
    <property type="project" value="TreeGrafter"/>
</dbReference>
<dbReference type="GO" id="GO:0033592">
    <property type="term" value="F:RNA strand annealing activity"/>
    <property type="evidence" value="ECO:0007669"/>
    <property type="project" value="UniProtKB-UniRule"/>
</dbReference>
<dbReference type="GO" id="GO:0034057">
    <property type="term" value="F:RNA strand-exchange activity"/>
    <property type="evidence" value="ECO:0007669"/>
    <property type="project" value="UniProtKB-UniRule"/>
</dbReference>
<dbReference type="GO" id="GO:0010608">
    <property type="term" value="P:post-transcriptional regulation of gene expression"/>
    <property type="evidence" value="ECO:0007669"/>
    <property type="project" value="InterPro"/>
</dbReference>
<dbReference type="FunFam" id="1.10.1710.10:FF:000001">
    <property type="entry name" value="RNA chaperone ProQ"/>
    <property type="match status" value="1"/>
</dbReference>
<dbReference type="Gene3D" id="1.10.1710.10">
    <property type="entry name" value="ProQ/FinO domain"/>
    <property type="match status" value="1"/>
</dbReference>
<dbReference type="HAMAP" id="MF_00749">
    <property type="entry name" value="ProQ"/>
    <property type="match status" value="1"/>
</dbReference>
<dbReference type="InterPro" id="IPR023529">
    <property type="entry name" value="ProQ"/>
</dbReference>
<dbReference type="InterPro" id="IPR016103">
    <property type="entry name" value="ProQ/FinO"/>
</dbReference>
<dbReference type="InterPro" id="IPR036442">
    <property type="entry name" value="ProQ/FinO_sf"/>
</dbReference>
<dbReference type="InterPro" id="IPR035236">
    <property type="entry name" value="ProQ_C"/>
</dbReference>
<dbReference type="NCBIfam" id="NF003434">
    <property type="entry name" value="PRK04950.1"/>
    <property type="match status" value="1"/>
</dbReference>
<dbReference type="PANTHER" id="PTHR38106">
    <property type="entry name" value="RNA CHAPERONE PROQ"/>
    <property type="match status" value="1"/>
</dbReference>
<dbReference type="PANTHER" id="PTHR38106:SF1">
    <property type="entry name" value="RNA CHAPERONE PROQ"/>
    <property type="match status" value="1"/>
</dbReference>
<dbReference type="Pfam" id="PF04352">
    <property type="entry name" value="ProQ"/>
    <property type="match status" value="1"/>
</dbReference>
<dbReference type="Pfam" id="PF17516">
    <property type="entry name" value="ProQ_C"/>
    <property type="match status" value="1"/>
</dbReference>
<dbReference type="SMART" id="SM00945">
    <property type="entry name" value="ProQ"/>
    <property type="match status" value="1"/>
</dbReference>
<dbReference type="SUPFAM" id="SSF48657">
    <property type="entry name" value="FinO-like"/>
    <property type="match status" value="1"/>
</dbReference>
<reference key="1">
    <citation type="journal article" date="2005" name="Nucleic Acids Res.">
        <title>Genome dynamics and diversity of Shigella species, the etiologic agents of bacillary dysentery.</title>
        <authorList>
            <person name="Yang F."/>
            <person name="Yang J."/>
            <person name="Zhang X."/>
            <person name="Chen L."/>
            <person name="Jiang Y."/>
            <person name="Yan Y."/>
            <person name="Tang X."/>
            <person name="Wang J."/>
            <person name="Xiong Z."/>
            <person name="Dong J."/>
            <person name="Xue Y."/>
            <person name="Zhu Y."/>
            <person name="Xu X."/>
            <person name="Sun L."/>
            <person name="Chen S."/>
            <person name="Nie H."/>
            <person name="Peng J."/>
            <person name="Xu J."/>
            <person name="Wang Y."/>
            <person name="Yuan Z."/>
            <person name="Wen Y."/>
            <person name="Yao Z."/>
            <person name="Shen Y."/>
            <person name="Qiang B."/>
            <person name="Hou Y."/>
            <person name="Yu J."/>
            <person name="Jin Q."/>
        </authorList>
    </citation>
    <scope>NUCLEOTIDE SEQUENCE [LARGE SCALE GENOMIC DNA]</scope>
    <source>
        <strain>Sd197</strain>
    </source>
</reference>
<sequence>MENQPKLNSSKEVIAFLAERFPHCFSAEGEARPLKIGIFQDLVDRVAGEMNLSKTQLRSALRLYTSSWRYLYGVKPGATRVDLDGNPCGELDEQHVEHARKQLEEAKARVQAQRAEQQAKKREAAAAAGEKEDAPRRERKPRPTTPRRKEGAERKPRAQKPVEKAPKTAKAPREEQHTPVSDISALTVGQALKVKAGQNAMDATVLEITKDGVRVQLNSGMSLIVRAEHLVF</sequence>
<evidence type="ECO:0000255" key="1">
    <source>
        <dbReference type="HAMAP-Rule" id="MF_00749"/>
    </source>
</evidence>
<evidence type="ECO:0000256" key="2">
    <source>
        <dbReference type="SAM" id="MobiDB-lite"/>
    </source>
</evidence>
<gene>
    <name evidence="1" type="primary">proQ</name>
    <name type="ordered locus">SDY_1979</name>
</gene>
<keyword id="KW-0143">Chaperone</keyword>
<keyword id="KW-0963">Cytoplasm</keyword>
<keyword id="KW-1185">Reference proteome</keyword>
<keyword id="KW-0694">RNA-binding</keyword>
<protein>
    <recommendedName>
        <fullName evidence="1">RNA chaperone ProQ</fullName>
    </recommendedName>
</protein>